<evidence type="ECO:0000255" key="1"/>
<evidence type="ECO:0000255" key="2">
    <source>
        <dbReference type="PROSITE-ProRule" id="PRU00498"/>
    </source>
</evidence>
<evidence type="ECO:0000303" key="3">
    <source>
    </source>
</evidence>
<evidence type="ECO:0000305" key="4"/>
<evidence type="ECO:0000305" key="5">
    <source>
    </source>
</evidence>
<evidence type="ECO:0000312" key="6">
    <source>
        <dbReference type="Araport" id="AT4G24973"/>
    </source>
</evidence>
<organism>
    <name type="scientific">Arabidopsis thaliana</name>
    <name type="common">Mouse-ear cress</name>
    <dbReference type="NCBI Taxonomy" id="3702"/>
    <lineage>
        <taxon>Eukaryota</taxon>
        <taxon>Viridiplantae</taxon>
        <taxon>Streptophyta</taxon>
        <taxon>Embryophyta</taxon>
        <taxon>Tracheophyta</taxon>
        <taxon>Spermatophyta</taxon>
        <taxon>Magnoliopsida</taxon>
        <taxon>eudicotyledons</taxon>
        <taxon>Gunneridae</taxon>
        <taxon>Pentapetalae</taxon>
        <taxon>rosids</taxon>
        <taxon>malvids</taxon>
        <taxon>Brassicales</taxon>
        <taxon>Brassicaceae</taxon>
        <taxon>Camelineae</taxon>
        <taxon>Arabidopsis</taxon>
    </lineage>
</organism>
<protein>
    <recommendedName>
        <fullName evidence="3">S-protein homolog 18</fullName>
    </recommendedName>
</protein>
<reference key="1">
    <citation type="journal article" date="1999" name="Nature">
        <title>Sequence and analysis of chromosome 4 of the plant Arabidopsis thaliana.</title>
        <authorList>
            <person name="Mayer K.F.X."/>
            <person name="Schueller C."/>
            <person name="Wambutt R."/>
            <person name="Murphy G."/>
            <person name="Volckaert G."/>
            <person name="Pohl T."/>
            <person name="Duesterhoeft A."/>
            <person name="Stiekema W."/>
            <person name="Entian K.-D."/>
            <person name="Terryn N."/>
            <person name="Harris B."/>
            <person name="Ansorge W."/>
            <person name="Brandt P."/>
            <person name="Grivell L.A."/>
            <person name="Rieger M."/>
            <person name="Weichselgartner M."/>
            <person name="de Simone V."/>
            <person name="Obermaier B."/>
            <person name="Mache R."/>
            <person name="Mueller M."/>
            <person name="Kreis M."/>
            <person name="Delseny M."/>
            <person name="Puigdomenech P."/>
            <person name="Watson M."/>
            <person name="Schmidtheini T."/>
            <person name="Reichert B."/>
            <person name="Portetelle D."/>
            <person name="Perez-Alonso M."/>
            <person name="Boutry M."/>
            <person name="Bancroft I."/>
            <person name="Vos P."/>
            <person name="Hoheisel J."/>
            <person name="Zimmermann W."/>
            <person name="Wedler H."/>
            <person name="Ridley P."/>
            <person name="Langham S.-A."/>
            <person name="McCullagh B."/>
            <person name="Bilham L."/>
            <person name="Robben J."/>
            <person name="van der Schueren J."/>
            <person name="Grymonprez B."/>
            <person name="Chuang Y.-J."/>
            <person name="Vandenbussche F."/>
            <person name="Braeken M."/>
            <person name="Weltjens I."/>
            <person name="Voet M."/>
            <person name="Bastiaens I."/>
            <person name="Aert R."/>
            <person name="Defoor E."/>
            <person name="Weitzenegger T."/>
            <person name="Bothe G."/>
            <person name="Ramsperger U."/>
            <person name="Hilbert H."/>
            <person name="Braun M."/>
            <person name="Holzer E."/>
            <person name="Brandt A."/>
            <person name="Peters S."/>
            <person name="van Staveren M."/>
            <person name="Dirkse W."/>
            <person name="Mooijman P."/>
            <person name="Klein Lankhorst R."/>
            <person name="Rose M."/>
            <person name="Hauf J."/>
            <person name="Koetter P."/>
            <person name="Berneiser S."/>
            <person name="Hempel S."/>
            <person name="Feldpausch M."/>
            <person name="Lamberth S."/>
            <person name="Van den Daele H."/>
            <person name="De Keyser A."/>
            <person name="Buysshaert C."/>
            <person name="Gielen J."/>
            <person name="Villarroel R."/>
            <person name="De Clercq R."/>
            <person name="van Montagu M."/>
            <person name="Rogers J."/>
            <person name="Cronin A."/>
            <person name="Quail M.A."/>
            <person name="Bray-Allen S."/>
            <person name="Clark L."/>
            <person name="Doggett J."/>
            <person name="Hall S."/>
            <person name="Kay M."/>
            <person name="Lennard N."/>
            <person name="McLay K."/>
            <person name="Mayes R."/>
            <person name="Pettett A."/>
            <person name="Rajandream M.A."/>
            <person name="Lyne M."/>
            <person name="Benes V."/>
            <person name="Rechmann S."/>
            <person name="Borkova D."/>
            <person name="Bloecker H."/>
            <person name="Scharfe M."/>
            <person name="Grimm M."/>
            <person name="Loehnert T.-H."/>
            <person name="Dose S."/>
            <person name="de Haan M."/>
            <person name="Maarse A.C."/>
            <person name="Schaefer M."/>
            <person name="Mueller-Auer S."/>
            <person name="Gabel C."/>
            <person name="Fuchs M."/>
            <person name="Fartmann B."/>
            <person name="Granderath K."/>
            <person name="Dauner D."/>
            <person name="Herzl A."/>
            <person name="Neumann S."/>
            <person name="Argiriou A."/>
            <person name="Vitale D."/>
            <person name="Liguori R."/>
            <person name="Piravandi E."/>
            <person name="Massenet O."/>
            <person name="Quigley F."/>
            <person name="Clabauld G."/>
            <person name="Muendlein A."/>
            <person name="Felber R."/>
            <person name="Schnabl S."/>
            <person name="Hiller R."/>
            <person name="Schmidt W."/>
            <person name="Lecharny A."/>
            <person name="Aubourg S."/>
            <person name="Chefdor F."/>
            <person name="Cooke R."/>
            <person name="Berger C."/>
            <person name="Monfort A."/>
            <person name="Casacuberta E."/>
            <person name="Gibbons T."/>
            <person name="Weber N."/>
            <person name="Vandenbol M."/>
            <person name="Bargues M."/>
            <person name="Terol J."/>
            <person name="Torres A."/>
            <person name="Perez-Perez A."/>
            <person name="Purnelle B."/>
            <person name="Bent E."/>
            <person name="Johnson S."/>
            <person name="Tacon D."/>
            <person name="Jesse T."/>
            <person name="Heijnen L."/>
            <person name="Schwarz S."/>
            <person name="Scholler P."/>
            <person name="Heber S."/>
            <person name="Francs P."/>
            <person name="Bielke C."/>
            <person name="Frishman D."/>
            <person name="Haase D."/>
            <person name="Lemcke K."/>
            <person name="Mewes H.-W."/>
            <person name="Stocker S."/>
            <person name="Zaccaria P."/>
            <person name="Bevan M."/>
            <person name="Wilson R.K."/>
            <person name="de la Bastide M."/>
            <person name="Habermann K."/>
            <person name="Parnell L."/>
            <person name="Dedhia N."/>
            <person name="Gnoj L."/>
            <person name="Schutz K."/>
            <person name="Huang E."/>
            <person name="Spiegel L."/>
            <person name="Sekhon M."/>
            <person name="Murray J."/>
            <person name="Sheet P."/>
            <person name="Cordes M."/>
            <person name="Abu-Threideh J."/>
            <person name="Stoneking T."/>
            <person name="Kalicki J."/>
            <person name="Graves T."/>
            <person name="Harmon G."/>
            <person name="Edwards J."/>
            <person name="Latreille P."/>
            <person name="Courtney L."/>
            <person name="Cloud J."/>
            <person name="Abbott A."/>
            <person name="Scott K."/>
            <person name="Johnson D."/>
            <person name="Minx P."/>
            <person name="Bentley D."/>
            <person name="Fulton B."/>
            <person name="Miller N."/>
            <person name="Greco T."/>
            <person name="Kemp K."/>
            <person name="Kramer J."/>
            <person name="Fulton L."/>
            <person name="Mardis E."/>
            <person name="Dante M."/>
            <person name="Pepin K."/>
            <person name="Hillier L.W."/>
            <person name="Nelson J."/>
            <person name="Spieth J."/>
            <person name="Ryan E."/>
            <person name="Andrews S."/>
            <person name="Geisel C."/>
            <person name="Layman D."/>
            <person name="Du H."/>
            <person name="Ali J."/>
            <person name="Berghoff A."/>
            <person name="Jones K."/>
            <person name="Drone K."/>
            <person name="Cotton M."/>
            <person name="Joshu C."/>
            <person name="Antonoiu B."/>
            <person name="Zidanic M."/>
            <person name="Strong C."/>
            <person name="Sun H."/>
            <person name="Lamar B."/>
            <person name="Yordan C."/>
            <person name="Ma P."/>
            <person name="Zhong J."/>
            <person name="Preston R."/>
            <person name="Vil D."/>
            <person name="Shekher M."/>
            <person name="Matero A."/>
            <person name="Shah R."/>
            <person name="Swaby I.K."/>
            <person name="O'Shaughnessy A."/>
            <person name="Rodriguez M."/>
            <person name="Hoffman J."/>
            <person name="Till S."/>
            <person name="Granat S."/>
            <person name="Shohdy N."/>
            <person name="Hasegawa A."/>
            <person name="Hameed A."/>
            <person name="Lodhi M."/>
            <person name="Johnson A."/>
            <person name="Chen E."/>
            <person name="Marra M.A."/>
            <person name="Martienssen R."/>
            <person name="McCombie W.R."/>
        </authorList>
    </citation>
    <scope>NUCLEOTIDE SEQUENCE [LARGE SCALE GENOMIC DNA]</scope>
    <source>
        <strain>cv. Columbia</strain>
    </source>
</reference>
<reference key="2">
    <citation type="journal article" date="2017" name="Plant J.">
        <title>Araport11: a complete reannotation of the Arabidopsis thaliana reference genome.</title>
        <authorList>
            <person name="Cheng C.Y."/>
            <person name="Krishnakumar V."/>
            <person name="Chan A.P."/>
            <person name="Thibaud-Nissen F."/>
            <person name="Schobel S."/>
            <person name="Town C.D."/>
        </authorList>
    </citation>
    <scope>GENOME REANNOTATION</scope>
    <source>
        <strain>cv. Columbia</strain>
    </source>
</reference>
<reference key="3">
    <citation type="journal article" date="1999" name="Plant Mol. Biol.">
        <title>Analysis of Arabidopsis genome sequence reveals a large new gene family in plants.</title>
        <authorList>
            <person name="Ride J.P."/>
            <person name="Davies E.M."/>
            <person name="Franklin F.C.H."/>
            <person name="Marshall D.F."/>
        </authorList>
    </citation>
    <scope>GENE FAMILY</scope>
    <scope>NOMENCLATURE</scope>
    <source>
        <strain>cv. Columbia</strain>
    </source>
</reference>
<name>SPH18_ARATH</name>
<sequence>MCPSSFRLILSVILIAFLFVGLCEAHRHINVDIINDIGPNVQLGLHCKSKGKDLGPQSLAPHQHWGFTASLNVWETTLFFCHFVWENQSRWFDILKEKRDTIVCKYHPCVWSIRPSGPCRLTDHEKCYPCNADI</sequence>
<feature type="signal peptide" evidence="1">
    <location>
        <begin position="1"/>
        <end position="25"/>
    </location>
</feature>
<feature type="chain" id="PRO_5002789125" description="S-protein homolog 18">
    <location>
        <begin position="26"/>
        <end position="134"/>
    </location>
</feature>
<feature type="glycosylation site" description="N-linked (GlcNAc...) asparagine" evidence="2">
    <location>
        <position position="87"/>
    </location>
</feature>
<comment type="subcellular location">
    <subcellularLocation>
        <location evidence="5">Secreted</location>
    </subcellularLocation>
</comment>
<comment type="similarity">
    <text evidence="4">Belongs to the plant self-incompatibility (S1) protein family.</text>
</comment>
<accession>B3H730</accession>
<proteinExistence type="inferred from homology"/>
<gene>
    <name evidence="3" type="primary">SPH18</name>
    <name evidence="6" type="ordered locus">At4g24973</name>
    <name evidence="4" type="ORF">F6I7</name>
</gene>
<dbReference type="EMBL" id="AL049657">
    <property type="status" value="NOT_ANNOTATED_CDS"/>
    <property type="molecule type" value="Genomic_DNA"/>
</dbReference>
<dbReference type="EMBL" id="CP002687">
    <property type="protein sequence ID" value="AEE84985.1"/>
    <property type="molecule type" value="Genomic_DNA"/>
</dbReference>
<dbReference type="RefSeq" id="NP_001119049.1">
    <property type="nucleotide sequence ID" value="NM_001125577.1"/>
</dbReference>
<dbReference type="SMR" id="B3H730"/>
<dbReference type="GlyCosmos" id="B3H730">
    <property type="glycosylation" value="1 site, No reported glycans"/>
</dbReference>
<dbReference type="GlyGen" id="B3H730">
    <property type="glycosylation" value="1 site"/>
</dbReference>
<dbReference type="PaxDb" id="3702-AT4G24973.1"/>
<dbReference type="EnsemblPlants" id="AT4G24973.1">
    <property type="protein sequence ID" value="AT4G24973.1"/>
    <property type="gene ID" value="AT4G24973"/>
</dbReference>
<dbReference type="GeneID" id="6240286"/>
<dbReference type="Gramene" id="AT4G24973.1">
    <property type="protein sequence ID" value="AT4G24973.1"/>
    <property type="gene ID" value="AT4G24973"/>
</dbReference>
<dbReference type="KEGG" id="ath:AT4G24973"/>
<dbReference type="Araport" id="AT4G24973"/>
<dbReference type="TAIR" id="AT4G24973"/>
<dbReference type="eggNOG" id="ENOG502SVTJ">
    <property type="taxonomic scope" value="Eukaryota"/>
</dbReference>
<dbReference type="HOGENOM" id="CLU_125658_0_1_1"/>
<dbReference type="InParanoid" id="B3H730"/>
<dbReference type="OMA" id="CHFVWEN"/>
<dbReference type="PhylomeDB" id="B3H730"/>
<dbReference type="PRO" id="PR:B3H730"/>
<dbReference type="Proteomes" id="UP000006548">
    <property type="component" value="Chromosome 4"/>
</dbReference>
<dbReference type="ExpressionAtlas" id="B3H730">
    <property type="expression patterns" value="baseline and differential"/>
</dbReference>
<dbReference type="GO" id="GO:0005576">
    <property type="term" value="C:extracellular region"/>
    <property type="evidence" value="ECO:0007669"/>
    <property type="project" value="UniProtKB-SubCell"/>
</dbReference>
<dbReference type="GO" id="GO:0060320">
    <property type="term" value="P:rejection of self pollen"/>
    <property type="evidence" value="ECO:0007669"/>
    <property type="project" value="UniProtKB-KW"/>
</dbReference>
<dbReference type="InterPro" id="IPR010264">
    <property type="entry name" value="Self-incomp_S1"/>
</dbReference>
<dbReference type="PANTHER" id="PTHR31232">
    <property type="match status" value="1"/>
</dbReference>
<dbReference type="PANTHER" id="PTHR31232:SF163">
    <property type="entry name" value="S-PROTEIN HOMOLOG 18-RELATED"/>
    <property type="match status" value="1"/>
</dbReference>
<dbReference type="Pfam" id="PF05938">
    <property type="entry name" value="Self-incomp_S1"/>
    <property type="match status" value="1"/>
</dbReference>
<keyword id="KW-0325">Glycoprotein</keyword>
<keyword id="KW-1185">Reference proteome</keyword>
<keyword id="KW-0964">Secreted</keyword>
<keyword id="KW-0713">Self-incompatibility</keyword>
<keyword id="KW-0732">Signal</keyword>